<protein>
    <recommendedName>
        <fullName>Ovomucoid</fullName>
    </recommendedName>
</protein>
<dbReference type="PIR" id="A31446">
    <property type="entry name" value="A31446"/>
</dbReference>
<dbReference type="SMR" id="P05587"/>
<dbReference type="GO" id="GO:0005576">
    <property type="term" value="C:extracellular region"/>
    <property type="evidence" value="ECO:0007669"/>
    <property type="project" value="UniProtKB-SubCell"/>
</dbReference>
<dbReference type="GO" id="GO:0004867">
    <property type="term" value="F:serine-type endopeptidase inhibitor activity"/>
    <property type="evidence" value="ECO:0007669"/>
    <property type="project" value="UniProtKB-KW"/>
</dbReference>
<dbReference type="CDD" id="cd00104">
    <property type="entry name" value="KAZAL_FS"/>
    <property type="match status" value="1"/>
</dbReference>
<dbReference type="FunFam" id="3.30.60.30:FF:000037">
    <property type="entry name" value="Ovomucoid"/>
    <property type="match status" value="1"/>
</dbReference>
<dbReference type="Gene3D" id="3.30.60.30">
    <property type="match status" value="1"/>
</dbReference>
<dbReference type="InterPro" id="IPR051597">
    <property type="entry name" value="Bifunctional_prot_inhibitor"/>
</dbReference>
<dbReference type="InterPro" id="IPR002350">
    <property type="entry name" value="Kazal_dom"/>
</dbReference>
<dbReference type="InterPro" id="IPR036058">
    <property type="entry name" value="Kazal_dom_sf"/>
</dbReference>
<dbReference type="InterPro" id="IPR001239">
    <property type="entry name" value="Prot_inh_Kazal-m"/>
</dbReference>
<dbReference type="PANTHER" id="PTHR47729:SF1">
    <property type="entry name" value="OVOMUCOID-LIKE-RELATED"/>
    <property type="match status" value="1"/>
</dbReference>
<dbReference type="PANTHER" id="PTHR47729">
    <property type="entry name" value="SERINE PEPTIDASE INHIBITOR, KAZAL TYPE 2, TANDEM DUPLICATE 1-RELATED"/>
    <property type="match status" value="1"/>
</dbReference>
<dbReference type="Pfam" id="PF00050">
    <property type="entry name" value="Kazal_1"/>
    <property type="match status" value="1"/>
</dbReference>
<dbReference type="PRINTS" id="PR00290">
    <property type="entry name" value="KAZALINHBTR"/>
</dbReference>
<dbReference type="SMART" id="SM00280">
    <property type="entry name" value="KAZAL"/>
    <property type="match status" value="1"/>
</dbReference>
<dbReference type="SUPFAM" id="SSF100895">
    <property type="entry name" value="Kazal-type serine protease inhibitors"/>
    <property type="match status" value="1"/>
</dbReference>
<dbReference type="PROSITE" id="PS00282">
    <property type="entry name" value="KAZAL_1"/>
    <property type="match status" value="1"/>
</dbReference>
<dbReference type="PROSITE" id="PS51465">
    <property type="entry name" value="KAZAL_2"/>
    <property type="match status" value="1"/>
</dbReference>
<reference key="1">
    <citation type="journal article" date="1987" name="Biochemistry">
        <title>Ovomucoid third domains from 100 avian species: isolation, sequences, and hypervariability of enzyme-inhibitor contact residues.</title>
        <authorList>
            <person name="Laskowski M. Jr."/>
            <person name="Kato I."/>
            <person name="Ardelt W."/>
            <person name="Cook J."/>
            <person name="Denton A."/>
            <person name="Empie M.W."/>
            <person name="Kohr W.J."/>
            <person name="Park S.J."/>
            <person name="Parks K."/>
            <person name="Schatzley B.L."/>
            <person name="Schoenberger O.L."/>
            <person name="Tashiro M."/>
            <person name="Vichot G."/>
            <person name="Whatley H.E."/>
            <person name="Wieczorek A."/>
            <person name="Wieczorek M."/>
        </authorList>
    </citation>
    <scope>PROTEIN SEQUENCE</scope>
</reference>
<reference key="2">
    <citation type="journal article" date="1982" name="Biochemistry">
        <title>Thermodynamics and kinetics of single residue replacements in avian ovomucoid third domains: effect on inhibitor interactions with serine proteinases.</title>
        <authorList>
            <person name="Empie M.W."/>
            <person name="Laskowski M. Jr."/>
        </authorList>
    </citation>
    <scope>PROTEIN SEQUENCE</scope>
</reference>
<organism>
    <name type="scientific">Oreortyx pictus</name>
    <name type="common">Mountain quail</name>
    <dbReference type="NCBI Taxonomy" id="9029"/>
    <lineage>
        <taxon>Eukaryota</taxon>
        <taxon>Metazoa</taxon>
        <taxon>Chordata</taxon>
        <taxon>Craniata</taxon>
        <taxon>Vertebrata</taxon>
        <taxon>Euteleostomi</taxon>
        <taxon>Archelosauria</taxon>
        <taxon>Archosauria</taxon>
        <taxon>Dinosauria</taxon>
        <taxon>Saurischia</taxon>
        <taxon>Theropoda</taxon>
        <taxon>Coelurosauria</taxon>
        <taxon>Aves</taxon>
        <taxon>Neognathae</taxon>
        <taxon>Galloanserae</taxon>
        <taxon>Galliformes</taxon>
        <taxon>Odontophoridae</taxon>
        <taxon>Oreortyx</taxon>
    </lineage>
</organism>
<proteinExistence type="evidence at protein level"/>
<comment type="subcellular location">
    <subcellularLocation>
        <location>Secreted</location>
    </subcellularLocation>
</comment>
<comment type="domain">
    <text>Avian ovomucoid consists of three homologous, tandem Kazal family inhibitory domains.</text>
</comment>
<keyword id="KW-0903">Direct protein sequencing</keyword>
<keyword id="KW-1015">Disulfide bond</keyword>
<keyword id="KW-0325">Glycoprotein</keyword>
<keyword id="KW-0646">Protease inhibitor</keyword>
<keyword id="KW-0677">Repeat</keyword>
<keyword id="KW-0964">Secreted</keyword>
<keyword id="KW-0722">Serine protease inhibitor</keyword>
<feature type="chain" id="PRO_0000073152" description="Ovomucoid">
    <location>
        <begin position="1" status="less than"/>
        <end position="56" status="greater than"/>
    </location>
</feature>
<feature type="domain" description="Kazal-like" evidence="1">
    <location>
        <begin position="6"/>
        <end position="56"/>
    </location>
</feature>
<feature type="site" description="Reactive bond 3">
    <location>
        <begin position="18"/>
        <end position="19"/>
    </location>
</feature>
<feature type="glycosylation site" description="N-linked (GlcNAc...) asparagine">
    <location>
        <position position="45"/>
    </location>
</feature>
<feature type="disulfide bond">
    <location>
        <begin position="8"/>
        <end position="38"/>
    </location>
</feature>
<feature type="disulfide bond">
    <location>
        <begin position="16"/>
        <end position="35"/>
    </location>
</feature>
<feature type="disulfide bond">
    <location>
        <begin position="24"/>
        <end position="56"/>
    </location>
</feature>
<feature type="non-terminal residue">
    <location>
        <position position="1"/>
    </location>
</feature>
<feature type="non-terminal residue">
    <location>
        <position position="56"/>
    </location>
</feature>
<accession>P05587</accession>
<evidence type="ECO:0000255" key="1">
    <source>
        <dbReference type="PROSITE-ProRule" id="PRU00798"/>
    </source>
</evidence>
<name>IOVO_OREPI</name>
<sequence>FAAVSVDCSEYPKPACTLEYRPLCGSDSKTYANKCNFCNAVVESNGTLTLSHFGKC</sequence>